<name>Y1276_STAAB</name>
<comment type="similarity">
    <text evidence="1">Belongs to the UPF0346 family.</text>
</comment>
<proteinExistence type="inferred from homology"/>
<sequence length="73" mass="8870">MKNYSFYQFVMTVRGRHDDKGRLAEEIFDDLAFPKHDDDFNILSDYIETHGDFTLPMSVFDDLYEEYTEWLKF</sequence>
<feature type="chain" id="PRO_0000298749" description="UPF0346 protein SAB1276c">
    <location>
        <begin position="1"/>
        <end position="73"/>
    </location>
</feature>
<dbReference type="EMBL" id="AJ938182">
    <property type="protein sequence ID" value="CAI80965.1"/>
    <property type="molecule type" value="Genomic_DNA"/>
</dbReference>
<dbReference type="RefSeq" id="WP_000801007.1">
    <property type="nucleotide sequence ID" value="NC_007622.1"/>
</dbReference>
<dbReference type="SMR" id="Q2YXZ8"/>
<dbReference type="KEGG" id="sab:SAB1276c"/>
<dbReference type="HOGENOM" id="CLU_177534_1_0_9"/>
<dbReference type="Gene3D" id="1.10.150.260">
    <property type="entry name" value="YozE SAM-like"/>
    <property type="match status" value="1"/>
</dbReference>
<dbReference type="HAMAP" id="MF_01538">
    <property type="entry name" value="UPF0346"/>
    <property type="match status" value="1"/>
</dbReference>
<dbReference type="InterPro" id="IPR010673">
    <property type="entry name" value="UPF0346"/>
</dbReference>
<dbReference type="InterPro" id="IPR023089">
    <property type="entry name" value="YozE_SAM-like"/>
</dbReference>
<dbReference type="InterPro" id="IPR036806">
    <property type="entry name" value="YozE_SAM-like_sf"/>
</dbReference>
<dbReference type="NCBIfam" id="NF010193">
    <property type="entry name" value="PRK13672.1"/>
    <property type="match status" value="1"/>
</dbReference>
<dbReference type="Pfam" id="PF06855">
    <property type="entry name" value="YozE_SAM_like"/>
    <property type="match status" value="1"/>
</dbReference>
<dbReference type="PIRSF" id="PIRSF037262">
    <property type="entry name" value="UCP037262"/>
    <property type="match status" value="1"/>
</dbReference>
<dbReference type="SUPFAM" id="SSF140652">
    <property type="entry name" value="YozE-like"/>
    <property type="match status" value="1"/>
</dbReference>
<protein>
    <recommendedName>
        <fullName evidence="1">UPF0346 protein SAB1276c</fullName>
    </recommendedName>
</protein>
<gene>
    <name type="ordered locus">SAB1276c</name>
</gene>
<evidence type="ECO:0000255" key="1">
    <source>
        <dbReference type="HAMAP-Rule" id="MF_01538"/>
    </source>
</evidence>
<accession>Q2YXZ8</accession>
<reference key="1">
    <citation type="journal article" date="2007" name="PLoS ONE">
        <title>Molecular correlates of host specialization in Staphylococcus aureus.</title>
        <authorList>
            <person name="Herron-Olson L."/>
            <person name="Fitzgerald J.R."/>
            <person name="Musser J.M."/>
            <person name="Kapur V."/>
        </authorList>
    </citation>
    <scope>NUCLEOTIDE SEQUENCE [LARGE SCALE GENOMIC DNA]</scope>
    <source>
        <strain>bovine RF122 / ET3-1</strain>
    </source>
</reference>
<organism>
    <name type="scientific">Staphylococcus aureus (strain bovine RF122 / ET3-1)</name>
    <dbReference type="NCBI Taxonomy" id="273036"/>
    <lineage>
        <taxon>Bacteria</taxon>
        <taxon>Bacillati</taxon>
        <taxon>Bacillota</taxon>
        <taxon>Bacilli</taxon>
        <taxon>Bacillales</taxon>
        <taxon>Staphylococcaceae</taxon>
        <taxon>Staphylococcus</taxon>
    </lineage>
</organism>